<evidence type="ECO:0000250" key="1">
    <source>
        <dbReference type="UniProtKB" id="Q12567"/>
    </source>
</evidence>
<evidence type="ECO:0000255" key="2"/>
<evidence type="ECO:0000255" key="3">
    <source>
        <dbReference type="PROSITE-ProRule" id="PRU01103"/>
    </source>
</evidence>
<evidence type="ECO:0000305" key="4"/>
<comment type="function">
    <text evidence="1">Secreted aspartic endopeptidase that allows assimilation of proteinaceous substrates. The scissile peptide bond is attacked by a nucleophilic water molecule activated by two aspartic residues in the active site. Shows a broad primary substrate specificity. Favors hydrophobic residues at the P1 and P1' positions, but also accepts a lysine residue in the P1 position, leading to the activation of trypsinogen and chymotrypsinogen A.</text>
</comment>
<comment type="catalytic activity">
    <reaction evidence="1">
        <text>Hydrolysis of proteins with broad specificity. Generally favors hydrophobic residues in P1 and P1', but also accepts Lys in P1, which leads to activation of trypsinogen. Does not clot milk.</text>
        <dbReference type="EC" id="3.4.23.18"/>
    </reaction>
</comment>
<comment type="subunit">
    <text evidence="1">Monomer.</text>
</comment>
<comment type="subcellular location">
    <subcellularLocation>
        <location evidence="1">Secreted</location>
    </subcellularLocation>
</comment>
<comment type="similarity">
    <text evidence="3">Belongs to the peptidase A1 family.</text>
</comment>
<name>PEPA_ASPCL</name>
<gene>
    <name type="primary">pepA</name>
    <name type="ORF">ACLA_016280</name>
</gene>
<protein>
    <recommendedName>
        <fullName evidence="4">Aspergillopepsin-1</fullName>
        <ecNumber evidence="1">3.4.23.18</ecNumber>
    </recommendedName>
    <alternativeName>
        <fullName>Aspartic protease pepA</fullName>
    </alternativeName>
    <alternativeName>
        <fullName>Aspergillopepsin I</fullName>
    </alternativeName>
    <alternativeName>
        <fullName>Aspergillopeptidase A</fullName>
    </alternativeName>
</protein>
<feature type="signal peptide" evidence="2">
    <location>
        <begin position="1"/>
        <end position="20"/>
    </location>
</feature>
<feature type="propeptide" id="PRO_0000407039" description="Activation peptide" evidence="1">
    <location>
        <begin position="21"/>
        <end position="69"/>
    </location>
</feature>
<feature type="chain" id="PRO_0000407040" description="Aspergillopepsin-1">
    <location>
        <begin position="70"/>
        <end position="394"/>
    </location>
</feature>
<feature type="domain" description="Peptidase A1" evidence="3">
    <location>
        <begin position="85"/>
        <end position="391"/>
    </location>
</feature>
<feature type="active site" evidence="3">
    <location>
        <position position="101"/>
    </location>
</feature>
<feature type="active site" evidence="3">
    <location>
        <position position="283"/>
    </location>
</feature>
<feature type="disulfide bond" evidence="3">
    <location>
        <begin position="319"/>
        <end position="354"/>
    </location>
</feature>
<reference key="1">
    <citation type="journal article" date="2008" name="PLoS Genet.">
        <title>Genomic islands in the pathogenic filamentous fungus Aspergillus fumigatus.</title>
        <authorList>
            <person name="Fedorova N.D."/>
            <person name="Khaldi N."/>
            <person name="Joardar V.S."/>
            <person name="Maiti R."/>
            <person name="Amedeo P."/>
            <person name="Anderson M.J."/>
            <person name="Crabtree J."/>
            <person name="Silva J.C."/>
            <person name="Badger J.H."/>
            <person name="Albarraq A."/>
            <person name="Angiuoli S."/>
            <person name="Bussey H."/>
            <person name="Bowyer P."/>
            <person name="Cotty P.J."/>
            <person name="Dyer P.S."/>
            <person name="Egan A."/>
            <person name="Galens K."/>
            <person name="Fraser-Liggett C.M."/>
            <person name="Haas B.J."/>
            <person name="Inman J.M."/>
            <person name="Kent R."/>
            <person name="Lemieux S."/>
            <person name="Malavazi I."/>
            <person name="Orvis J."/>
            <person name="Roemer T."/>
            <person name="Ronning C.M."/>
            <person name="Sundaram J.P."/>
            <person name="Sutton G."/>
            <person name="Turner G."/>
            <person name="Venter J.C."/>
            <person name="White O.R."/>
            <person name="Whitty B.R."/>
            <person name="Youngman P."/>
            <person name="Wolfe K.H."/>
            <person name="Goldman G.H."/>
            <person name="Wortman J.R."/>
            <person name="Jiang B."/>
            <person name="Denning D.W."/>
            <person name="Nierman W.C."/>
        </authorList>
    </citation>
    <scope>NUCLEOTIDE SEQUENCE [LARGE SCALE GENOMIC DNA]</scope>
    <source>
        <strain>ATCC 1007 / CBS 513.65 / DSM 816 / NCTC 3887 / NRRL 1 / QM 1276 / 107</strain>
    </source>
</reference>
<proteinExistence type="inferred from homology"/>
<accession>A1CBR4</accession>
<keyword id="KW-0064">Aspartyl protease</keyword>
<keyword id="KW-1015">Disulfide bond</keyword>
<keyword id="KW-0378">Hydrolase</keyword>
<keyword id="KW-0645">Protease</keyword>
<keyword id="KW-1185">Reference proteome</keyword>
<keyword id="KW-0964">Secreted</keyword>
<keyword id="KW-0732">Signal</keyword>
<keyword id="KW-0865">Zymogen</keyword>
<sequence length="394" mass="40934">MVVFSKVTAAVFGLATIASAAPAPPTRKGFTVQQQARPAQKKQVNLPAMYAHALTKFGGSVPESVKVAASKGSAVTTPEAGDVEYLTPVNVGGTVMNLDFDTGSADLWVFSGELPASETSGHSVYKPGRTASKLPGGSWQISYGDGSSASGDVYKDTVVVGGVTAHGQAVEAAAQISSQFLQDKNNDGLLGLAFSSLNTVQPQPQTTFFDTVKSSLDRPLFAVTLKHNAPGSFDFGYIDHSKYTGEIAYTDVDNSQGFWSFTADGYSIGGGQSSGSSISGIADTGTTLLLLDDNVVSDFYQHVEGAQNSDEYGGYVFPCSAKVPSFTTIIGGYKAVTPGKLINYGPVTDGSSTCYGGIQSSGGVGQNIFGDIFLKSQFVVFDSEGPRLGFAAQA</sequence>
<organism>
    <name type="scientific">Aspergillus clavatus (strain ATCC 1007 / CBS 513.65 / DSM 816 / NCTC 3887 / NRRL 1 / QM 1276 / 107)</name>
    <dbReference type="NCBI Taxonomy" id="344612"/>
    <lineage>
        <taxon>Eukaryota</taxon>
        <taxon>Fungi</taxon>
        <taxon>Dikarya</taxon>
        <taxon>Ascomycota</taxon>
        <taxon>Pezizomycotina</taxon>
        <taxon>Eurotiomycetes</taxon>
        <taxon>Eurotiomycetidae</taxon>
        <taxon>Eurotiales</taxon>
        <taxon>Aspergillaceae</taxon>
        <taxon>Aspergillus</taxon>
        <taxon>Aspergillus subgen. Fumigati</taxon>
    </lineage>
</organism>
<dbReference type="EC" id="3.4.23.18" evidence="1"/>
<dbReference type="EMBL" id="DS027049">
    <property type="protein sequence ID" value="EAW13182.1"/>
    <property type="molecule type" value="Genomic_DNA"/>
</dbReference>
<dbReference type="RefSeq" id="XP_001274608.1">
    <property type="nucleotide sequence ID" value="XM_001274607.1"/>
</dbReference>
<dbReference type="SMR" id="A1CBR4"/>
<dbReference type="STRING" id="344612.A1CBR4"/>
<dbReference type="MEROPS" id="A01.026"/>
<dbReference type="EnsemblFungi" id="EAW13182">
    <property type="protein sequence ID" value="EAW13182"/>
    <property type="gene ID" value="ACLA_016280"/>
</dbReference>
<dbReference type="GeneID" id="4706595"/>
<dbReference type="KEGG" id="act:ACLA_016280"/>
<dbReference type="VEuPathDB" id="FungiDB:ACLA_016280"/>
<dbReference type="eggNOG" id="KOG1339">
    <property type="taxonomic scope" value="Eukaryota"/>
</dbReference>
<dbReference type="HOGENOM" id="CLU_013253_0_1_1"/>
<dbReference type="OMA" id="TKATFDW"/>
<dbReference type="OrthoDB" id="2747330at2759"/>
<dbReference type="Proteomes" id="UP000006701">
    <property type="component" value="Unassembled WGS sequence"/>
</dbReference>
<dbReference type="GO" id="GO:0005576">
    <property type="term" value="C:extracellular region"/>
    <property type="evidence" value="ECO:0007669"/>
    <property type="project" value="UniProtKB-SubCell"/>
</dbReference>
<dbReference type="GO" id="GO:0004190">
    <property type="term" value="F:aspartic-type endopeptidase activity"/>
    <property type="evidence" value="ECO:0007669"/>
    <property type="project" value="UniProtKB-KW"/>
</dbReference>
<dbReference type="GO" id="GO:0006508">
    <property type="term" value="P:proteolysis"/>
    <property type="evidence" value="ECO:0007669"/>
    <property type="project" value="UniProtKB-KW"/>
</dbReference>
<dbReference type="CDD" id="cd06097">
    <property type="entry name" value="Aspergillopepsin_like"/>
    <property type="match status" value="1"/>
</dbReference>
<dbReference type="FunFam" id="2.40.70.10:FF:000024">
    <property type="entry name" value="Endothiapepsin"/>
    <property type="match status" value="1"/>
</dbReference>
<dbReference type="FunFam" id="2.40.70.10:FF:000026">
    <property type="entry name" value="Endothiapepsin"/>
    <property type="match status" value="1"/>
</dbReference>
<dbReference type="Gene3D" id="2.40.70.10">
    <property type="entry name" value="Acid Proteases"/>
    <property type="match status" value="2"/>
</dbReference>
<dbReference type="InterPro" id="IPR001461">
    <property type="entry name" value="Aspartic_peptidase_A1"/>
</dbReference>
<dbReference type="InterPro" id="IPR001969">
    <property type="entry name" value="Aspartic_peptidase_AS"/>
</dbReference>
<dbReference type="InterPro" id="IPR034163">
    <property type="entry name" value="Aspergillopepsin-like_cat_dom"/>
</dbReference>
<dbReference type="InterPro" id="IPR033121">
    <property type="entry name" value="PEPTIDASE_A1"/>
</dbReference>
<dbReference type="InterPro" id="IPR021109">
    <property type="entry name" value="Peptidase_aspartic_dom_sf"/>
</dbReference>
<dbReference type="PANTHER" id="PTHR47966:SF2">
    <property type="entry name" value="ASPERGILLOPEPSIN-1-RELATED"/>
    <property type="match status" value="1"/>
</dbReference>
<dbReference type="PANTHER" id="PTHR47966">
    <property type="entry name" value="BETA-SITE APP-CLEAVING ENZYME, ISOFORM A-RELATED"/>
    <property type="match status" value="1"/>
</dbReference>
<dbReference type="Pfam" id="PF00026">
    <property type="entry name" value="Asp"/>
    <property type="match status" value="1"/>
</dbReference>
<dbReference type="PRINTS" id="PR00792">
    <property type="entry name" value="PEPSIN"/>
</dbReference>
<dbReference type="SUPFAM" id="SSF50630">
    <property type="entry name" value="Acid proteases"/>
    <property type="match status" value="1"/>
</dbReference>
<dbReference type="PROSITE" id="PS00141">
    <property type="entry name" value="ASP_PROTEASE"/>
    <property type="match status" value="2"/>
</dbReference>
<dbReference type="PROSITE" id="PS51767">
    <property type="entry name" value="PEPTIDASE_A1"/>
    <property type="match status" value="1"/>
</dbReference>